<name>FMT_XYLFA</name>
<reference key="1">
    <citation type="journal article" date="2000" name="Nature">
        <title>The genome sequence of the plant pathogen Xylella fastidiosa.</title>
        <authorList>
            <person name="Simpson A.J.G."/>
            <person name="Reinach F.C."/>
            <person name="Arruda P."/>
            <person name="Abreu F.A."/>
            <person name="Acencio M."/>
            <person name="Alvarenga R."/>
            <person name="Alves L.M.C."/>
            <person name="Araya J.E."/>
            <person name="Baia G.S."/>
            <person name="Baptista C.S."/>
            <person name="Barros M.H."/>
            <person name="Bonaccorsi E.D."/>
            <person name="Bordin S."/>
            <person name="Bove J.M."/>
            <person name="Briones M.R.S."/>
            <person name="Bueno M.R.P."/>
            <person name="Camargo A.A."/>
            <person name="Camargo L.E.A."/>
            <person name="Carraro D.M."/>
            <person name="Carrer H."/>
            <person name="Colauto N.B."/>
            <person name="Colombo C."/>
            <person name="Costa F.F."/>
            <person name="Costa M.C.R."/>
            <person name="Costa-Neto C.M."/>
            <person name="Coutinho L.L."/>
            <person name="Cristofani M."/>
            <person name="Dias-Neto E."/>
            <person name="Docena C."/>
            <person name="El-Dorry H."/>
            <person name="Facincani A.P."/>
            <person name="Ferreira A.J.S."/>
            <person name="Ferreira V.C.A."/>
            <person name="Ferro J.A."/>
            <person name="Fraga J.S."/>
            <person name="Franca S.C."/>
            <person name="Franco M.C."/>
            <person name="Frohme M."/>
            <person name="Furlan L.R."/>
            <person name="Garnier M."/>
            <person name="Goldman G.H."/>
            <person name="Goldman M.H.S."/>
            <person name="Gomes S.L."/>
            <person name="Gruber A."/>
            <person name="Ho P.L."/>
            <person name="Hoheisel J.D."/>
            <person name="Junqueira M.L."/>
            <person name="Kemper E.L."/>
            <person name="Kitajima J.P."/>
            <person name="Krieger J.E."/>
            <person name="Kuramae E.E."/>
            <person name="Laigret F."/>
            <person name="Lambais M.R."/>
            <person name="Leite L.C.C."/>
            <person name="Lemos E.G.M."/>
            <person name="Lemos M.V.F."/>
            <person name="Lopes S.A."/>
            <person name="Lopes C.R."/>
            <person name="Machado J.A."/>
            <person name="Machado M.A."/>
            <person name="Madeira A.M.B.N."/>
            <person name="Madeira H.M.F."/>
            <person name="Marino C.L."/>
            <person name="Marques M.V."/>
            <person name="Martins E.A.L."/>
            <person name="Martins E.M.F."/>
            <person name="Matsukuma A.Y."/>
            <person name="Menck C.F.M."/>
            <person name="Miracca E.C."/>
            <person name="Miyaki C.Y."/>
            <person name="Monteiro-Vitorello C.B."/>
            <person name="Moon D.H."/>
            <person name="Nagai M.A."/>
            <person name="Nascimento A.L.T.O."/>
            <person name="Netto L.E.S."/>
            <person name="Nhani A. Jr."/>
            <person name="Nobrega F.G."/>
            <person name="Nunes L.R."/>
            <person name="Oliveira M.A."/>
            <person name="de Oliveira M.C."/>
            <person name="de Oliveira R.C."/>
            <person name="Palmieri D.A."/>
            <person name="Paris A."/>
            <person name="Peixoto B.R."/>
            <person name="Pereira G.A.G."/>
            <person name="Pereira H.A. Jr."/>
            <person name="Pesquero J.B."/>
            <person name="Quaggio R.B."/>
            <person name="Roberto P.G."/>
            <person name="Rodrigues V."/>
            <person name="de Rosa A.J.M."/>
            <person name="de Rosa V.E. Jr."/>
            <person name="de Sa R.G."/>
            <person name="Santelli R.V."/>
            <person name="Sawasaki H.E."/>
            <person name="da Silva A.C.R."/>
            <person name="da Silva A.M."/>
            <person name="da Silva F.R."/>
            <person name="Silva W.A. Jr."/>
            <person name="da Silveira J.F."/>
            <person name="Silvestri M.L.Z."/>
            <person name="Siqueira W.J."/>
            <person name="de Souza A.A."/>
            <person name="de Souza A.P."/>
            <person name="Terenzi M.F."/>
            <person name="Truffi D."/>
            <person name="Tsai S.M."/>
            <person name="Tsuhako M.H."/>
            <person name="Vallada H."/>
            <person name="Van Sluys M.A."/>
            <person name="Verjovski-Almeida S."/>
            <person name="Vettore A.L."/>
            <person name="Zago M.A."/>
            <person name="Zatz M."/>
            <person name="Meidanis J."/>
            <person name="Setubal J.C."/>
        </authorList>
    </citation>
    <scope>NUCLEOTIDE SEQUENCE [LARGE SCALE GENOMIC DNA]</scope>
    <source>
        <strain>9a5c</strain>
    </source>
</reference>
<accession>Q9PEV1</accession>
<dbReference type="EC" id="2.1.2.9" evidence="1"/>
<dbReference type="EMBL" id="AE003849">
    <property type="protein sequence ID" value="AAF83737.1"/>
    <property type="molecule type" value="Genomic_DNA"/>
</dbReference>
<dbReference type="PIR" id="H82743">
    <property type="entry name" value="H82743"/>
</dbReference>
<dbReference type="RefSeq" id="WP_010893446.1">
    <property type="nucleotide sequence ID" value="NC_002488.3"/>
</dbReference>
<dbReference type="SMR" id="Q9PEV1"/>
<dbReference type="STRING" id="160492.XF_0927"/>
<dbReference type="KEGG" id="xfa:XF_0927"/>
<dbReference type="PATRIC" id="fig|160492.11.peg.993"/>
<dbReference type="eggNOG" id="COG0223">
    <property type="taxonomic scope" value="Bacteria"/>
</dbReference>
<dbReference type="HOGENOM" id="CLU_033347_1_2_6"/>
<dbReference type="Proteomes" id="UP000000812">
    <property type="component" value="Chromosome"/>
</dbReference>
<dbReference type="GO" id="GO:0005829">
    <property type="term" value="C:cytosol"/>
    <property type="evidence" value="ECO:0007669"/>
    <property type="project" value="TreeGrafter"/>
</dbReference>
<dbReference type="GO" id="GO:0004479">
    <property type="term" value="F:methionyl-tRNA formyltransferase activity"/>
    <property type="evidence" value="ECO:0007669"/>
    <property type="project" value="UniProtKB-UniRule"/>
</dbReference>
<dbReference type="CDD" id="cd08646">
    <property type="entry name" value="FMT_core_Met-tRNA-FMT_N"/>
    <property type="match status" value="1"/>
</dbReference>
<dbReference type="CDD" id="cd08704">
    <property type="entry name" value="Met_tRNA_FMT_C"/>
    <property type="match status" value="1"/>
</dbReference>
<dbReference type="Gene3D" id="3.10.25.10">
    <property type="entry name" value="Formyl transferase, C-terminal domain"/>
    <property type="match status" value="1"/>
</dbReference>
<dbReference type="Gene3D" id="3.40.50.170">
    <property type="entry name" value="Formyl transferase, N-terminal domain"/>
    <property type="match status" value="1"/>
</dbReference>
<dbReference type="HAMAP" id="MF_00182">
    <property type="entry name" value="Formyl_trans"/>
    <property type="match status" value="1"/>
</dbReference>
<dbReference type="InterPro" id="IPR005794">
    <property type="entry name" value="Fmt"/>
</dbReference>
<dbReference type="InterPro" id="IPR005793">
    <property type="entry name" value="Formyl_trans_C"/>
</dbReference>
<dbReference type="InterPro" id="IPR037022">
    <property type="entry name" value="Formyl_trans_C_sf"/>
</dbReference>
<dbReference type="InterPro" id="IPR002376">
    <property type="entry name" value="Formyl_transf_N"/>
</dbReference>
<dbReference type="InterPro" id="IPR036477">
    <property type="entry name" value="Formyl_transf_N_sf"/>
</dbReference>
<dbReference type="InterPro" id="IPR011034">
    <property type="entry name" value="Formyl_transferase-like_C_sf"/>
</dbReference>
<dbReference type="InterPro" id="IPR001555">
    <property type="entry name" value="GART_AS"/>
</dbReference>
<dbReference type="InterPro" id="IPR044135">
    <property type="entry name" value="Met-tRNA-FMT_C"/>
</dbReference>
<dbReference type="InterPro" id="IPR041711">
    <property type="entry name" value="Met-tRNA-FMT_N"/>
</dbReference>
<dbReference type="NCBIfam" id="TIGR00460">
    <property type="entry name" value="fmt"/>
    <property type="match status" value="1"/>
</dbReference>
<dbReference type="PANTHER" id="PTHR11138">
    <property type="entry name" value="METHIONYL-TRNA FORMYLTRANSFERASE"/>
    <property type="match status" value="1"/>
</dbReference>
<dbReference type="PANTHER" id="PTHR11138:SF5">
    <property type="entry name" value="METHIONYL-TRNA FORMYLTRANSFERASE, MITOCHONDRIAL"/>
    <property type="match status" value="1"/>
</dbReference>
<dbReference type="Pfam" id="PF02911">
    <property type="entry name" value="Formyl_trans_C"/>
    <property type="match status" value="1"/>
</dbReference>
<dbReference type="Pfam" id="PF00551">
    <property type="entry name" value="Formyl_trans_N"/>
    <property type="match status" value="1"/>
</dbReference>
<dbReference type="SUPFAM" id="SSF50486">
    <property type="entry name" value="FMT C-terminal domain-like"/>
    <property type="match status" value="1"/>
</dbReference>
<dbReference type="SUPFAM" id="SSF53328">
    <property type="entry name" value="Formyltransferase"/>
    <property type="match status" value="1"/>
</dbReference>
<dbReference type="PROSITE" id="PS00373">
    <property type="entry name" value="GART"/>
    <property type="match status" value="1"/>
</dbReference>
<comment type="function">
    <text evidence="1">Attaches a formyl group to the free amino group of methionyl-tRNA(fMet). The formyl group appears to play a dual role in the initiator identity of N-formylmethionyl-tRNA by promoting its recognition by IF2 and preventing the misappropriation of this tRNA by the elongation apparatus.</text>
</comment>
<comment type="catalytic activity">
    <reaction evidence="1">
        <text>L-methionyl-tRNA(fMet) + (6R)-10-formyltetrahydrofolate = N-formyl-L-methionyl-tRNA(fMet) + (6S)-5,6,7,8-tetrahydrofolate + H(+)</text>
        <dbReference type="Rhea" id="RHEA:24380"/>
        <dbReference type="Rhea" id="RHEA-COMP:9952"/>
        <dbReference type="Rhea" id="RHEA-COMP:9953"/>
        <dbReference type="ChEBI" id="CHEBI:15378"/>
        <dbReference type="ChEBI" id="CHEBI:57453"/>
        <dbReference type="ChEBI" id="CHEBI:78530"/>
        <dbReference type="ChEBI" id="CHEBI:78844"/>
        <dbReference type="ChEBI" id="CHEBI:195366"/>
        <dbReference type="EC" id="2.1.2.9"/>
    </reaction>
</comment>
<comment type="similarity">
    <text evidence="1">Belongs to the Fmt family.</text>
</comment>
<proteinExistence type="inferred from homology"/>
<organism>
    <name type="scientific">Xylella fastidiosa (strain 9a5c)</name>
    <dbReference type="NCBI Taxonomy" id="160492"/>
    <lineage>
        <taxon>Bacteria</taxon>
        <taxon>Pseudomonadati</taxon>
        <taxon>Pseudomonadota</taxon>
        <taxon>Gammaproteobacteria</taxon>
        <taxon>Lysobacterales</taxon>
        <taxon>Lysobacteraceae</taxon>
        <taxon>Xylella</taxon>
    </lineage>
</organism>
<keyword id="KW-0648">Protein biosynthesis</keyword>
<keyword id="KW-0808">Transferase</keyword>
<feature type="chain" id="PRO_0000083091" description="Methionyl-tRNA formyltransferase">
    <location>
        <begin position="1"/>
        <end position="307"/>
    </location>
</feature>
<feature type="binding site" evidence="1">
    <location>
        <begin position="108"/>
        <end position="111"/>
    </location>
    <ligand>
        <name>(6S)-5,6,7,8-tetrahydrofolate</name>
        <dbReference type="ChEBI" id="CHEBI:57453"/>
    </ligand>
</feature>
<sequence length="307" mass="33237">MRIVFAGTPDFAVPSLRSVTQRADVVAVYTQPDRPAGRGRELTPSPVKLEAVARGLPVYQPQTLRSPEMLEQLRALRPDLIVVVAYGVILPEAVLAIPDDGCWNVHASLLPRWRGAAPIQRAIEAGDTETGVCLMQMEAGLDTGPVLMSLKTPINAYETSGQLHDRLAEMGAQLLSDGLGLLRAGLRPVPQPQLAAGVTYAHKLGKVEAQLDWEQPAERLACRVRAFQPWPVAEVVLCGERVRIHEALALDLDHSQPPGTVLAASKEGIDVACLQGALRLCRLQREGGKAITAADYLNARRDLQVRA</sequence>
<gene>
    <name evidence="1" type="primary">fmt</name>
    <name type="ordered locus">XF_0927</name>
</gene>
<protein>
    <recommendedName>
        <fullName evidence="1">Methionyl-tRNA formyltransferase</fullName>
        <ecNumber evidence="1">2.1.2.9</ecNumber>
    </recommendedName>
</protein>
<evidence type="ECO:0000255" key="1">
    <source>
        <dbReference type="HAMAP-Rule" id="MF_00182"/>
    </source>
</evidence>